<accession>Q17PI0</accession>
<reference key="1">
    <citation type="journal article" date="2007" name="Science">
        <title>Genome sequence of Aedes aegypti, a major arbovirus vector.</title>
        <authorList>
            <person name="Nene V."/>
            <person name="Wortman J.R."/>
            <person name="Lawson D."/>
            <person name="Haas B.J."/>
            <person name="Kodira C.D."/>
            <person name="Tu Z.J."/>
            <person name="Loftus B.J."/>
            <person name="Xi Z."/>
            <person name="Megy K."/>
            <person name="Grabherr M."/>
            <person name="Ren Q."/>
            <person name="Zdobnov E.M."/>
            <person name="Lobo N.F."/>
            <person name="Campbell K.S."/>
            <person name="Brown S.E."/>
            <person name="Bonaldo M.F."/>
            <person name="Zhu J."/>
            <person name="Sinkins S.P."/>
            <person name="Hogenkamp D.G."/>
            <person name="Amedeo P."/>
            <person name="Arensburger P."/>
            <person name="Atkinson P.W."/>
            <person name="Bidwell S.L."/>
            <person name="Biedler J."/>
            <person name="Birney E."/>
            <person name="Bruggner R.V."/>
            <person name="Costas J."/>
            <person name="Coy M.R."/>
            <person name="Crabtree J."/>
            <person name="Crawford M."/>
            <person name="DeBruyn B."/>
            <person name="DeCaprio D."/>
            <person name="Eiglmeier K."/>
            <person name="Eisenstadt E."/>
            <person name="El-Dorry H."/>
            <person name="Gelbart W.M."/>
            <person name="Gomes S.L."/>
            <person name="Hammond M."/>
            <person name="Hannick L.I."/>
            <person name="Hogan J.R."/>
            <person name="Holmes M.H."/>
            <person name="Jaffe D."/>
            <person name="Johnston S.J."/>
            <person name="Kennedy R.C."/>
            <person name="Koo H."/>
            <person name="Kravitz S."/>
            <person name="Kriventseva E.V."/>
            <person name="Kulp D."/>
            <person name="Labutti K."/>
            <person name="Lee E."/>
            <person name="Li S."/>
            <person name="Lovin D.D."/>
            <person name="Mao C."/>
            <person name="Mauceli E."/>
            <person name="Menck C.F."/>
            <person name="Miller J.R."/>
            <person name="Montgomery P."/>
            <person name="Mori A."/>
            <person name="Nascimento A.L."/>
            <person name="Naveira H.F."/>
            <person name="Nusbaum C."/>
            <person name="O'Leary S.B."/>
            <person name="Orvis J."/>
            <person name="Pertea M."/>
            <person name="Quesneville H."/>
            <person name="Reidenbach K.R."/>
            <person name="Rogers Y.-H.C."/>
            <person name="Roth C.W."/>
            <person name="Schneider J.R."/>
            <person name="Schatz M."/>
            <person name="Shumway M."/>
            <person name="Stanke M."/>
            <person name="Stinson E.O."/>
            <person name="Tubio J.M.C."/>
            <person name="Vanzee J.P."/>
            <person name="Verjovski-Almeida S."/>
            <person name="Werner D."/>
            <person name="White O.R."/>
            <person name="Wyder S."/>
            <person name="Zeng Q."/>
            <person name="Zhao Q."/>
            <person name="Zhao Y."/>
            <person name="Hill C.A."/>
            <person name="Raikhel A.S."/>
            <person name="Soares M.B."/>
            <person name="Knudson D.L."/>
            <person name="Lee N.H."/>
            <person name="Galagan J."/>
            <person name="Salzberg S.L."/>
            <person name="Paulsen I.T."/>
            <person name="Dimopoulos G."/>
            <person name="Collins F.H."/>
            <person name="Bruce B."/>
            <person name="Fraser-Liggett C.M."/>
            <person name="Severson D.W."/>
        </authorList>
    </citation>
    <scope>NUCLEOTIDE SEQUENCE [LARGE SCALE GENOMIC DNA]</scope>
    <source>
        <strain>LVPib12</strain>
    </source>
</reference>
<proteinExistence type="inferred from homology"/>
<organism>
    <name type="scientific">Aedes aegypti</name>
    <name type="common">Yellowfever mosquito</name>
    <name type="synonym">Culex aegypti</name>
    <dbReference type="NCBI Taxonomy" id="7159"/>
    <lineage>
        <taxon>Eukaryota</taxon>
        <taxon>Metazoa</taxon>
        <taxon>Ecdysozoa</taxon>
        <taxon>Arthropoda</taxon>
        <taxon>Hexapoda</taxon>
        <taxon>Insecta</taxon>
        <taxon>Pterygota</taxon>
        <taxon>Neoptera</taxon>
        <taxon>Endopterygota</taxon>
        <taxon>Diptera</taxon>
        <taxon>Nematocera</taxon>
        <taxon>Culicoidea</taxon>
        <taxon>Culicidae</taxon>
        <taxon>Culicinae</taxon>
        <taxon>Aedini</taxon>
        <taxon>Aedes</taxon>
        <taxon>Stegomyia</taxon>
    </lineage>
</organism>
<protein>
    <recommendedName>
        <fullName evidence="1">Elongation factor Ts, mitochondrial</fullName>
        <shortName evidence="1">EF-Ts</shortName>
        <shortName evidence="1">EF-TsMt</shortName>
    </recommendedName>
</protein>
<name>EFTS_AEDAE</name>
<comment type="function">
    <text evidence="1">Associates with the EF-Tu.GDP complex and induces the exchange of GDP to GTP. It remains bound to the aminoacyl-tRNA.EF-Tu.GTP complex up to the GTP hydrolysis stage on the ribosome.</text>
</comment>
<comment type="subcellular location">
    <subcellularLocation>
        <location evidence="1">Mitochondrion</location>
    </subcellularLocation>
</comment>
<comment type="similarity">
    <text evidence="1">Belongs to the EF-Ts family.</text>
</comment>
<sequence>MIFTRLTRFVGHGTGLRLYATAEKSSLATLRKKTGYTFANCKKALEMHNNDLAKAEQWLQEQAQAMGWSKATKLEGRNTTQGLIGIMVKNNIGAMVEVNCETDFVARNQSFQKFVQAASTACVRYMDQIEGDANLTKVGLNSESLKQIKLEDGKSLADHLALMIGTVGENASLNRAICFKAPESINLTGYVHPAPTEEVPLDVPQFGKYGSILAFKHTSADSNGEVAKKVCQHVVGMKPAKIGDKTRDEPAKDKDDETCLIYQEYLADPSYTVAEVLEANNVEVVDFQRFECGEKIKMDDETVRAVN</sequence>
<dbReference type="EMBL" id="CH477191">
    <property type="protein sequence ID" value="EAT48637.1"/>
    <property type="molecule type" value="Genomic_DNA"/>
</dbReference>
<dbReference type="RefSeq" id="XP_001655529.1">
    <property type="nucleotide sequence ID" value="XM_001655479.1"/>
</dbReference>
<dbReference type="SMR" id="Q17PI0"/>
<dbReference type="FunCoup" id="Q17PI0">
    <property type="interactions" value="2041"/>
</dbReference>
<dbReference type="STRING" id="7159.Q17PI0"/>
<dbReference type="PaxDb" id="7159-AAEL000331-PA"/>
<dbReference type="GeneID" id="5575152"/>
<dbReference type="KEGG" id="aag:5575152"/>
<dbReference type="CTD" id="35060"/>
<dbReference type="VEuPathDB" id="VectorBase:AAEL029004"/>
<dbReference type="eggNOG" id="KOG1071">
    <property type="taxonomic scope" value="Eukaryota"/>
</dbReference>
<dbReference type="HOGENOM" id="CLU_047155_4_0_1"/>
<dbReference type="InParanoid" id="Q17PI0"/>
<dbReference type="OMA" id="QEYMLDD"/>
<dbReference type="OrthoDB" id="277235at2759"/>
<dbReference type="PhylomeDB" id="Q17PI0"/>
<dbReference type="Proteomes" id="UP000008820">
    <property type="component" value="Unassembled WGS sequence"/>
</dbReference>
<dbReference type="Proteomes" id="UP000682892">
    <property type="component" value="Unassembled WGS sequence"/>
</dbReference>
<dbReference type="GO" id="GO:0005739">
    <property type="term" value="C:mitochondrion"/>
    <property type="evidence" value="ECO:0007669"/>
    <property type="project" value="UniProtKB-SubCell"/>
</dbReference>
<dbReference type="GO" id="GO:0003746">
    <property type="term" value="F:translation elongation factor activity"/>
    <property type="evidence" value="ECO:0007669"/>
    <property type="project" value="UniProtKB-UniRule"/>
</dbReference>
<dbReference type="GO" id="GO:0070125">
    <property type="term" value="P:mitochondrial translational elongation"/>
    <property type="evidence" value="ECO:0007669"/>
    <property type="project" value="TreeGrafter"/>
</dbReference>
<dbReference type="CDD" id="cd14275">
    <property type="entry name" value="UBA_EF-Ts"/>
    <property type="match status" value="1"/>
</dbReference>
<dbReference type="FunFam" id="1.10.8.10:FF:000031">
    <property type="entry name" value="Elongation factor Ts, mitochondrial"/>
    <property type="match status" value="1"/>
</dbReference>
<dbReference type="FunFam" id="3.30.479.20:FF:000008">
    <property type="entry name" value="Elongation factor Ts, mitochondrial"/>
    <property type="match status" value="1"/>
</dbReference>
<dbReference type="Gene3D" id="1.10.8.10">
    <property type="entry name" value="DNA helicase RuvA subunit, C-terminal domain"/>
    <property type="match status" value="1"/>
</dbReference>
<dbReference type="Gene3D" id="3.30.479.20">
    <property type="entry name" value="Elongation factor Ts, dimerisation domain"/>
    <property type="match status" value="2"/>
</dbReference>
<dbReference type="HAMAP" id="MF_00050">
    <property type="entry name" value="EF_Ts"/>
    <property type="match status" value="1"/>
</dbReference>
<dbReference type="InterPro" id="IPR036402">
    <property type="entry name" value="EF-Ts_dimer_sf"/>
</dbReference>
<dbReference type="InterPro" id="IPR001816">
    <property type="entry name" value="Transl_elong_EFTs/EF1B"/>
</dbReference>
<dbReference type="InterPro" id="IPR014039">
    <property type="entry name" value="Transl_elong_EFTs/EF1B_dimer"/>
</dbReference>
<dbReference type="InterPro" id="IPR018101">
    <property type="entry name" value="Transl_elong_Ts_CS"/>
</dbReference>
<dbReference type="InterPro" id="IPR009060">
    <property type="entry name" value="UBA-like_sf"/>
</dbReference>
<dbReference type="NCBIfam" id="TIGR00116">
    <property type="entry name" value="tsf"/>
    <property type="match status" value="1"/>
</dbReference>
<dbReference type="PANTHER" id="PTHR11741">
    <property type="entry name" value="ELONGATION FACTOR TS"/>
    <property type="match status" value="1"/>
</dbReference>
<dbReference type="PANTHER" id="PTHR11741:SF0">
    <property type="entry name" value="ELONGATION FACTOR TS, MITOCHONDRIAL"/>
    <property type="match status" value="1"/>
</dbReference>
<dbReference type="Pfam" id="PF25025">
    <property type="entry name" value="EF-Ts_N"/>
    <property type="match status" value="1"/>
</dbReference>
<dbReference type="Pfam" id="PF00889">
    <property type="entry name" value="EF_TS"/>
    <property type="match status" value="2"/>
</dbReference>
<dbReference type="SUPFAM" id="SSF54713">
    <property type="entry name" value="Elongation factor Ts (EF-Ts), dimerisation domain"/>
    <property type="match status" value="1"/>
</dbReference>
<dbReference type="SUPFAM" id="SSF46934">
    <property type="entry name" value="UBA-like"/>
    <property type="match status" value="1"/>
</dbReference>
<dbReference type="PROSITE" id="PS01127">
    <property type="entry name" value="EF_TS_2"/>
    <property type="match status" value="1"/>
</dbReference>
<feature type="transit peptide" description="Mitochondrion" evidence="1">
    <location>
        <begin position="1"/>
        <end position="19"/>
    </location>
</feature>
<feature type="chain" id="PRO_0000402316" description="Elongation factor Ts, mitochondrial">
    <location>
        <begin position="20"/>
        <end position="307"/>
    </location>
</feature>
<evidence type="ECO:0000255" key="1">
    <source>
        <dbReference type="HAMAP-Rule" id="MF_03135"/>
    </source>
</evidence>
<gene>
    <name type="ORF">AAEL000331</name>
</gene>
<keyword id="KW-0251">Elongation factor</keyword>
<keyword id="KW-0496">Mitochondrion</keyword>
<keyword id="KW-0648">Protein biosynthesis</keyword>
<keyword id="KW-1185">Reference proteome</keyword>
<keyword id="KW-0809">Transit peptide</keyword>